<sequence length="397" mass="42422">MQGISVTGLVKRGWMVRSVFDTIDGIDQLGEQLASVTVTLDKLAAIQPQLVALLPDEIASQQINRELALANYATMSGIYAQTAALIENAAAMGQAFDAAKNDDSFYLPPEAFDNPDFQRGLKLFLSADGKAARMIISHEGDPATPEGISHIDAIKQAAHEAVKGTPMAGAGIYLAGTAATFKDIQDGATYDLLIAGIAALSLILLIMMIITRSLVAALVIVGTVALSLGASFGLSVLVWQHLLGIQLYWIVLALAVILLLAVGSDYNLLLISRFKEEIGAGLNTGIIRAMAGTGGVVTAAGLVFAATMSSFVFSDLRVLGQIGTTIGLGLLFDTLVVRAFMTPSIAVLLGRWFWWPQRVRPRPASRMLRPYGPRPVVRELLLREGNDDPRTQVATHR</sequence>
<dbReference type="EMBL" id="AL123456">
    <property type="protein sequence ID" value="CCP44321.1"/>
    <property type="molecule type" value="Genomic_DNA"/>
</dbReference>
<dbReference type="PIR" id="B70763">
    <property type="entry name" value="B70763"/>
</dbReference>
<dbReference type="RefSeq" id="NP_216073.1">
    <property type="nucleotide sequence ID" value="NC_000962.3"/>
</dbReference>
<dbReference type="RefSeq" id="WP_003901197.1">
    <property type="nucleotide sequence ID" value="NC_000962.3"/>
</dbReference>
<dbReference type="SMR" id="P9WJU9"/>
<dbReference type="STRING" id="83332.Rv1557"/>
<dbReference type="PaxDb" id="83332-Rv1557"/>
<dbReference type="GeneID" id="886033"/>
<dbReference type="KEGG" id="mtu:Rv1557"/>
<dbReference type="KEGG" id="mtv:RVBD_1557"/>
<dbReference type="PATRIC" id="fig|83332.111.peg.1734"/>
<dbReference type="TubercuList" id="Rv1557"/>
<dbReference type="eggNOG" id="COG2409">
    <property type="taxonomic scope" value="Bacteria"/>
</dbReference>
<dbReference type="InParanoid" id="P9WJU9"/>
<dbReference type="OrthoDB" id="4697176at2"/>
<dbReference type="PhylomeDB" id="P9WJU9"/>
<dbReference type="Proteomes" id="UP000001584">
    <property type="component" value="Chromosome"/>
</dbReference>
<dbReference type="GO" id="GO:0005886">
    <property type="term" value="C:plasma membrane"/>
    <property type="evidence" value="ECO:0007669"/>
    <property type="project" value="UniProtKB-SubCell"/>
</dbReference>
<dbReference type="FunFam" id="1.20.1640.10:FF:000018">
    <property type="entry name" value="Transmembrane transport protein MmpL10"/>
    <property type="match status" value="1"/>
</dbReference>
<dbReference type="Gene3D" id="1.20.1640.10">
    <property type="entry name" value="Multidrug efflux transporter AcrB transmembrane domain"/>
    <property type="match status" value="1"/>
</dbReference>
<dbReference type="InterPro" id="IPR004869">
    <property type="entry name" value="MMPL_dom"/>
</dbReference>
<dbReference type="InterPro" id="IPR050545">
    <property type="entry name" value="Mycobact_MmpL"/>
</dbReference>
<dbReference type="PANTHER" id="PTHR33406">
    <property type="entry name" value="MEMBRANE PROTEIN MJ1562-RELATED"/>
    <property type="match status" value="1"/>
</dbReference>
<dbReference type="PANTHER" id="PTHR33406:SF6">
    <property type="entry name" value="MEMBRANE PROTEIN YDGH-RELATED"/>
    <property type="match status" value="1"/>
</dbReference>
<dbReference type="Pfam" id="PF03176">
    <property type="entry name" value="MMPL"/>
    <property type="match status" value="1"/>
</dbReference>
<dbReference type="SUPFAM" id="SSF82866">
    <property type="entry name" value="Multidrug efflux transporter AcrB transmembrane domain"/>
    <property type="match status" value="1"/>
</dbReference>
<name>MMPL6_MYCTU</name>
<feature type="chain" id="PRO_0000103569" description="Probable transport protein MmpL6">
    <location>
        <begin position="1"/>
        <end position="397"/>
    </location>
</feature>
<feature type="transmembrane region" description="Helical" evidence="1">
    <location>
        <begin position="190"/>
        <end position="210"/>
    </location>
</feature>
<feature type="transmembrane region" description="Helical" evidence="1">
    <location>
        <begin position="214"/>
        <end position="234"/>
    </location>
</feature>
<feature type="transmembrane region" description="Helical" evidence="1">
    <location>
        <begin position="242"/>
        <end position="262"/>
    </location>
</feature>
<feature type="transmembrane region" description="Helical" evidence="1">
    <location>
        <begin position="293"/>
        <end position="313"/>
    </location>
</feature>
<feature type="transmembrane region" description="Helical" evidence="1">
    <location>
        <begin position="328"/>
        <end position="348"/>
    </location>
</feature>
<evidence type="ECO:0000255" key="1"/>
<evidence type="ECO:0000305" key="2"/>
<keyword id="KW-1003">Cell membrane</keyword>
<keyword id="KW-0472">Membrane</keyword>
<keyword id="KW-1185">Reference proteome</keyword>
<keyword id="KW-0812">Transmembrane</keyword>
<keyword id="KW-1133">Transmembrane helix</keyword>
<keyword id="KW-0813">Transport</keyword>
<gene>
    <name type="primary">mmpL6</name>
    <name type="ordered locus">Rv1557</name>
    <name type="ORF">MTCY48.08c</name>
</gene>
<accession>P9WJU9</accession>
<accession>L0T707</accession>
<accession>Q10773</accession>
<comment type="subcellular location">
    <subcellularLocation>
        <location evidence="2">Cell membrane</location>
        <topology evidence="1">Multi-pass membrane protein</topology>
    </subcellularLocation>
</comment>
<comment type="similarity">
    <text evidence="2">Belongs to the resistance-nodulation-cell division (RND) (TC 2.A.6) family. MmpL subfamily.</text>
</comment>
<proteinExistence type="inferred from homology"/>
<organism>
    <name type="scientific">Mycobacterium tuberculosis (strain ATCC 25618 / H37Rv)</name>
    <dbReference type="NCBI Taxonomy" id="83332"/>
    <lineage>
        <taxon>Bacteria</taxon>
        <taxon>Bacillati</taxon>
        <taxon>Actinomycetota</taxon>
        <taxon>Actinomycetes</taxon>
        <taxon>Mycobacteriales</taxon>
        <taxon>Mycobacteriaceae</taxon>
        <taxon>Mycobacterium</taxon>
        <taxon>Mycobacterium tuberculosis complex</taxon>
    </lineage>
</organism>
<reference key="1">
    <citation type="journal article" date="1998" name="Nature">
        <title>Deciphering the biology of Mycobacterium tuberculosis from the complete genome sequence.</title>
        <authorList>
            <person name="Cole S.T."/>
            <person name="Brosch R."/>
            <person name="Parkhill J."/>
            <person name="Garnier T."/>
            <person name="Churcher C.M."/>
            <person name="Harris D.E."/>
            <person name="Gordon S.V."/>
            <person name="Eiglmeier K."/>
            <person name="Gas S."/>
            <person name="Barry C.E. III"/>
            <person name="Tekaia F."/>
            <person name="Badcock K."/>
            <person name="Basham D."/>
            <person name="Brown D."/>
            <person name="Chillingworth T."/>
            <person name="Connor R."/>
            <person name="Davies R.M."/>
            <person name="Devlin K."/>
            <person name="Feltwell T."/>
            <person name="Gentles S."/>
            <person name="Hamlin N."/>
            <person name="Holroyd S."/>
            <person name="Hornsby T."/>
            <person name="Jagels K."/>
            <person name="Krogh A."/>
            <person name="McLean J."/>
            <person name="Moule S."/>
            <person name="Murphy L.D."/>
            <person name="Oliver S."/>
            <person name="Osborne J."/>
            <person name="Quail M.A."/>
            <person name="Rajandream M.A."/>
            <person name="Rogers J."/>
            <person name="Rutter S."/>
            <person name="Seeger K."/>
            <person name="Skelton S."/>
            <person name="Squares S."/>
            <person name="Squares R."/>
            <person name="Sulston J.E."/>
            <person name="Taylor K."/>
            <person name="Whitehead S."/>
            <person name="Barrell B.G."/>
        </authorList>
    </citation>
    <scope>NUCLEOTIDE SEQUENCE [LARGE SCALE GENOMIC DNA]</scope>
    <source>
        <strain>ATCC 25618 / H37Rv</strain>
    </source>
</reference>
<protein>
    <recommendedName>
        <fullName evidence="2">Probable transport protein MmpL6</fullName>
    </recommendedName>
</protein>